<evidence type="ECO:0000250" key="1"/>
<evidence type="ECO:0000250" key="2">
    <source>
        <dbReference type="UniProtKB" id="O94762"/>
    </source>
</evidence>
<evidence type="ECO:0000250" key="3">
    <source>
        <dbReference type="UniProtKB" id="Q8VID5"/>
    </source>
</evidence>
<evidence type="ECO:0000255" key="4">
    <source>
        <dbReference type="PROSITE-ProRule" id="PRU00541"/>
    </source>
</evidence>
<evidence type="ECO:0000255" key="5">
    <source>
        <dbReference type="PROSITE-ProRule" id="PRU00542"/>
    </source>
</evidence>
<evidence type="ECO:0000256" key="6">
    <source>
        <dbReference type="SAM" id="MobiDB-lite"/>
    </source>
</evidence>
<evidence type="ECO:0000305" key="7"/>
<evidence type="ECO:0007744" key="8">
    <source>
    </source>
</evidence>
<accession>D4ACP5</accession>
<comment type="function">
    <text evidence="2">DNA helicase that plays an important role in DNA replication, transcription and repair. Binds to the RNA polymerase II subunit POLR2A during transcription elongation and suppresses transcription-associated genomic instability. Also associates with POLR1A and enforces the stability of ribosomal DNA arrays. Plays an important role in mitotic chromosome separation after cross-over events and cell cycle progress. Mechanistically, removes RAD51 filaments protecting stalled replication forks at common fragile sites and stimulates MUS81-EME1 endonuclease leading to mitotic DNA synthesis. Required for efficient DNA repair, including repair of inter-strand cross-links. Stimulates DNA decatenation mediated by TOP2A. Prevents sister chromatid exchange and homologous recombination.</text>
</comment>
<comment type="catalytic activity">
    <reaction evidence="2">
        <text>Couples ATP hydrolysis with the unwinding of duplex DNA by translocating in the 3'-5' direction.</text>
        <dbReference type="EC" id="5.6.2.4"/>
    </reaction>
</comment>
<comment type="catalytic activity">
    <reaction evidence="2">
        <text>ATP + H2O = ADP + phosphate + H(+)</text>
        <dbReference type="Rhea" id="RHEA:13065"/>
        <dbReference type="ChEBI" id="CHEBI:15377"/>
        <dbReference type="ChEBI" id="CHEBI:15378"/>
        <dbReference type="ChEBI" id="CHEBI:30616"/>
        <dbReference type="ChEBI" id="CHEBI:43474"/>
        <dbReference type="ChEBI" id="CHEBI:456216"/>
    </reaction>
</comment>
<comment type="cofactor">
    <cofactor evidence="2">
        <name>Zn(2+)</name>
        <dbReference type="ChEBI" id="CHEBI:29105"/>
    </cofactor>
    <text evidence="2">Binds a Zn(2+) ion per subunit.</text>
</comment>
<comment type="subunit">
    <text evidence="2">Monomer. Interacts with TOP2A, TOP3A and TOP3B. Interacts with RNA polymerase II subunit POLR2A. Identified in a complex with the RNA polymerase II core bound to DNA. Interacts with RAD51. Interacts with WRN; this interaction stimulates WRN helicase activity on DNA fork duplexes. Interacts with MUS1; this interaction promotes MUS81-dependent mitotic DNA synthesis.</text>
</comment>
<comment type="subcellular location">
    <subcellularLocation>
        <location evidence="2">Nucleus</location>
        <location evidence="2">Nucleoplasm</location>
    </subcellularLocation>
    <text evidence="2">Recruited to sites of DNA damage, such as single-strand breaks and inter-strand cross-links, and at stalled replication forks.</text>
</comment>
<comment type="PTM">
    <text evidence="2">Phosphorylated by CDK1 at Ser-728; this phosphorylation is required for RECQL5-mediated disruption of RAD51 filaments on stalled replication forks.</text>
</comment>
<comment type="similarity">
    <text evidence="7">Belongs to the helicase family. RecQ subfamily.</text>
</comment>
<name>RECQ5_RAT</name>
<keyword id="KW-0067">ATP-binding</keyword>
<keyword id="KW-0131">Cell cycle</keyword>
<keyword id="KW-0132">Cell division</keyword>
<keyword id="KW-0227">DNA damage</keyword>
<keyword id="KW-0234">DNA repair</keyword>
<keyword id="KW-0235">DNA replication</keyword>
<keyword id="KW-0238">DNA-binding</keyword>
<keyword id="KW-0347">Helicase</keyword>
<keyword id="KW-0378">Hydrolase</keyword>
<keyword id="KW-0413">Isomerase</keyword>
<keyword id="KW-0479">Metal-binding</keyword>
<keyword id="KW-0498">Mitosis</keyword>
<keyword id="KW-0547">Nucleotide-binding</keyword>
<keyword id="KW-0539">Nucleus</keyword>
<keyword id="KW-0597">Phosphoprotein</keyword>
<keyword id="KW-1185">Reference proteome</keyword>
<keyword id="KW-0862">Zinc</keyword>
<dbReference type="EC" id="5.6.2.4" evidence="2"/>
<dbReference type="EMBL" id="AABR06066170">
    <property type="status" value="NOT_ANNOTATED_CDS"/>
    <property type="molecule type" value="Genomic_DNA"/>
</dbReference>
<dbReference type="EMBL" id="CH473948">
    <property type="protein sequence ID" value="EDM06625.1"/>
    <property type="molecule type" value="Genomic_DNA"/>
</dbReference>
<dbReference type="RefSeq" id="NP_001099323.1">
    <property type="nucleotide sequence ID" value="NM_001105853.1"/>
</dbReference>
<dbReference type="SMR" id="D4ACP5"/>
<dbReference type="FunCoup" id="D4ACP5">
    <property type="interactions" value="3589"/>
</dbReference>
<dbReference type="STRING" id="10116.ENSRNOP00000007246"/>
<dbReference type="iPTMnet" id="D4ACP5"/>
<dbReference type="PhosphoSitePlus" id="D4ACP5"/>
<dbReference type="PaxDb" id="10116-ENSRNOP00000007246"/>
<dbReference type="PeptideAtlas" id="D4ACP5"/>
<dbReference type="Ensembl" id="ENSRNOT00000007246.6">
    <property type="protein sequence ID" value="ENSRNOP00000007246.4"/>
    <property type="gene ID" value="ENSRNOG00000005107.6"/>
</dbReference>
<dbReference type="GeneID" id="287834"/>
<dbReference type="KEGG" id="rno:287834"/>
<dbReference type="AGR" id="RGD:1310823"/>
<dbReference type="CTD" id="9400"/>
<dbReference type="RGD" id="1310823">
    <property type="gene designation" value="Recql5"/>
</dbReference>
<dbReference type="eggNOG" id="KOG0352">
    <property type="taxonomic scope" value="Eukaryota"/>
</dbReference>
<dbReference type="GeneTree" id="ENSGT00940000157800"/>
<dbReference type="HOGENOM" id="CLU_001103_4_1_1"/>
<dbReference type="InParanoid" id="D4ACP5"/>
<dbReference type="OMA" id="WSDPGAC"/>
<dbReference type="OrthoDB" id="69414at9989"/>
<dbReference type="PhylomeDB" id="D4ACP5"/>
<dbReference type="TreeFam" id="TF317614"/>
<dbReference type="PRO" id="PR:D4ACP5"/>
<dbReference type="Proteomes" id="UP000002494">
    <property type="component" value="Chromosome 10"/>
</dbReference>
<dbReference type="Proteomes" id="UP000234681">
    <property type="component" value="Chromosome 10"/>
</dbReference>
<dbReference type="Bgee" id="ENSRNOG00000005107">
    <property type="expression patterns" value="Expressed in thymus and 19 other cell types or tissues"/>
</dbReference>
<dbReference type="GO" id="GO:0005694">
    <property type="term" value="C:chromosome"/>
    <property type="evidence" value="ECO:0000318"/>
    <property type="project" value="GO_Central"/>
</dbReference>
<dbReference type="GO" id="GO:0005737">
    <property type="term" value="C:cytoplasm"/>
    <property type="evidence" value="ECO:0000318"/>
    <property type="project" value="GO_Central"/>
</dbReference>
<dbReference type="GO" id="GO:0005654">
    <property type="term" value="C:nucleoplasm"/>
    <property type="evidence" value="ECO:0007669"/>
    <property type="project" value="UniProtKB-SubCell"/>
</dbReference>
<dbReference type="GO" id="GO:0005634">
    <property type="term" value="C:nucleus"/>
    <property type="evidence" value="ECO:0000250"/>
    <property type="project" value="UniProtKB"/>
</dbReference>
<dbReference type="GO" id="GO:0005657">
    <property type="term" value="C:replication fork"/>
    <property type="evidence" value="ECO:0000266"/>
    <property type="project" value="RGD"/>
</dbReference>
<dbReference type="GO" id="GO:0097550">
    <property type="term" value="C:transcription preinitiation complex"/>
    <property type="evidence" value="ECO:0000266"/>
    <property type="project" value="RGD"/>
</dbReference>
<dbReference type="GO" id="GO:0043138">
    <property type="term" value="F:3'-5' DNA helicase activity"/>
    <property type="evidence" value="ECO:0000318"/>
    <property type="project" value="GO_Central"/>
</dbReference>
<dbReference type="GO" id="GO:0005524">
    <property type="term" value="F:ATP binding"/>
    <property type="evidence" value="ECO:0007669"/>
    <property type="project" value="UniProtKB-KW"/>
</dbReference>
<dbReference type="GO" id="GO:0016887">
    <property type="term" value="F:ATP hydrolysis activity"/>
    <property type="evidence" value="ECO:0007669"/>
    <property type="project" value="RHEA"/>
</dbReference>
<dbReference type="GO" id="GO:0003677">
    <property type="term" value="F:DNA binding"/>
    <property type="evidence" value="ECO:0007669"/>
    <property type="project" value="UniProtKB-KW"/>
</dbReference>
<dbReference type="GO" id="GO:0003678">
    <property type="term" value="F:DNA helicase activity"/>
    <property type="evidence" value="ECO:0000250"/>
    <property type="project" value="UniProtKB"/>
</dbReference>
<dbReference type="GO" id="GO:0009378">
    <property type="term" value="F:four-way junction helicase activity"/>
    <property type="evidence" value="ECO:0000318"/>
    <property type="project" value="GO_Central"/>
</dbReference>
<dbReference type="GO" id="GO:0004386">
    <property type="term" value="F:helicase activity"/>
    <property type="evidence" value="ECO:0000266"/>
    <property type="project" value="RGD"/>
</dbReference>
<dbReference type="GO" id="GO:0046872">
    <property type="term" value="F:metal ion binding"/>
    <property type="evidence" value="ECO:0007669"/>
    <property type="project" value="UniProtKB-KW"/>
</dbReference>
<dbReference type="GO" id="GO:0000993">
    <property type="term" value="F:RNA polymerase II complex binding"/>
    <property type="evidence" value="ECO:0000250"/>
    <property type="project" value="UniProtKB"/>
</dbReference>
<dbReference type="GO" id="GO:0051301">
    <property type="term" value="P:cell division"/>
    <property type="evidence" value="ECO:0007669"/>
    <property type="project" value="UniProtKB-KW"/>
</dbReference>
<dbReference type="GO" id="GO:0072757">
    <property type="term" value="P:cellular response to camptothecin"/>
    <property type="evidence" value="ECO:0000266"/>
    <property type="project" value="RGD"/>
</dbReference>
<dbReference type="GO" id="GO:0071466">
    <property type="term" value="P:cellular response to xenobiotic stimulus"/>
    <property type="evidence" value="ECO:0000266"/>
    <property type="project" value="RGD"/>
</dbReference>
<dbReference type="GO" id="GO:0051304">
    <property type="term" value="P:chromosome separation"/>
    <property type="evidence" value="ECO:0000250"/>
    <property type="project" value="UniProtKB"/>
</dbReference>
<dbReference type="GO" id="GO:0006281">
    <property type="term" value="P:DNA repair"/>
    <property type="evidence" value="ECO:0000250"/>
    <property type="project" value="UniProtKB"/>
</dbReference>
<dbReference type="GO" id="GO:0006260">
    <property type="term" value="P:DNA replication"/>
    <property type="evidence" value="ECO:0000250"/>
    <property type="project" value="UniProtKB"/>
</dbReference>
<dbReference type="GO" id="GO:0000724">
    <property type="term" value="P:double-strand break repair via homologous recombination"/>
    <property type="evidence" value="ECO:0000318"/>
    <property type="project" value="GO_Central"/>
</dbReference>
<dbReference type="GO" id="GO:0000278">
    <property type="term" value="P:mitotic cell cycle"/>
    <property type="evidence" value="ECO:0000250"/>
    <property type="project" value="UniProtKB"/>
</dbReference>
<dbReference type="GO" id="GO:1990506">
    <property type="term" value="P:mitotic DNA-templated DNA replication"/>
    <property type="evidence" value="ECO:0000266"/>
    <property type="project" value="RGD"/>
</dbReference>
<dbReference type="GO" id="GO:2000042">
    <property type="term" value="P:negative regulation of double-strand break repair via homologous recombination"/>
    <property type="evidence" value="ECO:0000266"/>
    <property type="project" value="RGD"/>
</dbReference>
<dbReference type="GO" id="GO:0034244">
    <property type="term" value="P:negative regulation of transcription elongation by RNA polymerase II"/>
    <property type="evidence" value="ECO:0000250"/>
    <property type="project" value="UniProtKB"/>
</dbReference>
<dbReference type="GO" id="GO:1990414">
    <property type="term" value="P:replication-born double-strand break repair via sister chromatid exchange"/>
    <property type="evidence" value="ECO:0000266"/>
    <property type="project" value="RGD"/>
</dbReference>
<dbReference type="CDD" id="cd18014">
    <property type="entry name" value="DEXHc_RecQ5"/>
    <property type="match status" value="1"/>
</dbReference>
<dbReference type="CDD" id="cd18794">
    <property type="entry name" value="SF2_C_RecQ"/>
    <property type="match status" value="1"/>
</dbReference>
<dbReference type="FunFam" id="3.40.50.300:FF:000444">
    <property type="entry name" value="ATP-dependent DNA helicase"/>
    <property type="match status" value="1"/>
</dbReference>
<dbReference type="FunFam" id="3.40.50.300:FF:000614">
    <property type="entry name" value="ATP-dependent DNA helicase"/>
    <property type="match status" value="1"/>
</dbReference>
<dbReference type="Gene3D" id="6.10.250.2460">
    <property type="match status" value="1"/>
</dbReference>
<dbReference type="Gene3D" id="6.10.250.3140">
    <property type="match status" value="1"/>
</dbReference>
<dbReference type="Gene3D" id="3.40.50.300">
    <property type="entry name" value="P-loop containing nucleotide triphosphate hydrolases"/>
    <property type="match status" value="2"/>
</dbReference>
<dbReference type="InterPro" id="IPR011545">
    <property type="entry name" value="DEAD/DEAH_box_helicase_dom"/>
</dbReference>
<dbReference type="InterPro" id="IPR002464">
    <property type="entry name" value="DNA/RNA_helicase_DEAH_CS"/>
</dbReference>
<dbReference type="InterPro" id="IPR004589">
    <property type="entry name" value="DNA_helicase_ATP-dep_RecQ"/>
</dbReference>
<dbReference type="InterPro" id="IPR014001">
    <property type="entry name" value="Helicase_ATP-bd"/>
</dbReference>
<dbReference type="InterPro" id="IPR001650">
    <property type="entry name" value="Helicase_C-like"/>
</dbReference>
<dbReference type="InterPro" id="IPR027417">
    <property type="entry name" value="P-loop_NTPase"/>
</dbReference>
<dbReference type="InterPro" id="IPR010716">
    <property type="entry name" value="RECQ5"/>
</dbReference>
<dbReference type="InterPro" id="IPR032284">
    <property type="entry name" value="RecQ_Zn-bd"/>
</dbReference>
<dbReference type="InterPro" id="IPR013257">
    <property type="entry name" value="SRI"/>
</dbReference>
<dbReference type="NCBIfam" id="TIGR00614">
    <property type="entry name" value="recQ_fam"/>
    <property type="match status" value="1"/>
</dbReference>
<dbReference type="PANTHER" id="PTHR13710:SF152">
    <property type="entry name" value="ATP-DEPENDENT DNA HELICASE Q5"/>
    <property type="match status" value="1"/>
</dbReference>
<dbReference type="PANTHER" id="PTHR13710">
    <property type="entry name" value="DNA HELICASE RECQ FAMILY MEMBER"/>
    <property type="match status" value="1"/>
</dbReference>
<dbReference type="Pfam" id="PF00270">
    <property type="entry name" value="DEAD"/>
    <property type="match status" value="1"/>
</dbReference>
<dbReference type="Pfam" id="PF00271">
    <property type="entry name" value="Helicase_C"/>
    <property type="match status" value="1"/>
</dbReference>
<dbReference type="Pfam" id="PF06959">
    <property type="entry name" value="RecQ5"/>
    <property type="match status" value="1"/>
</dbReference>
<dbReference type="Pfam" id="PF16124">
    <property type="entry name" value="RecQ_Zn_bind"/>
    <property type="match status" value="1"/>
</dbReference>
<dbReference type="Pfam" id="PF08236">
    <property type="entry name" value="SRI"/>
    <property type="match status" value="1"/>
</dbReference>
<dbReference type="SMART" id="SM00487">
    <property type="entry name" value="DEXDc"/>
    <property type="match status" value="1"/>
</dbReference>
<dbReference type="SMART" id="SM00490">
    <property type="entry name" value="HELICc"/>
    <property type="match status" value="1"/>
</dbReference>
<dbReference type="SUPFAM" id="SSF52540">
    <property type="entry name" value="P-loop containing nucleoside triphosphate hydrolases"/>
    <property type="match status" value="1"/>
</dbReference>
<dbReference type="PROSITE" id="PS00690">
    <property type="entry name" value="DEAH_ATP_HELICASE"/>
    <property type="match status" value="1"/>
</dbReference>
<dbReference type="PROSITE" id="PS51192">
    <property type="entry name" value="HELICASE_ATP_BIND_1"/>
    <property type="match status" value="1"/>
</dbReference>
<dbReference type="PROSITE" id="PS51194">
    <property type="entry name" value="HELICASE_CTER"/>
    <property type="match status" value="1"/>
</dbReference>
<reference key="1">
    <citation type="journal article" date="2004" name="Nature">
        <title>Genome sequence of the Brown Norway rat yields insights into mammalian evolution.</title>
        <authorList>
            <person name="Gibbs R.A."/>
            <person name="Weinstock G.M."/>
            <person name="Metzker M.L."/>
            <person name="Muzny D.M."/>
            <person name="Sodergren E.J."/>
            <person name="Scherer S."/>
            <person name="Scott G."/>
            <person name="Steffen D."/>
            <person name="Worley K.C."/>
            <person name="Burch P.E."/>
            <person name="Okwuonu G."/>
            <person name="Hines S."/>
            <person name="Lewis L."/>
            <person name="Deramo C."/>
            <person name="Delgado O."/>
            <person name="Dugan-Rocha S."/>
            <person name="Miner G."/>
            <person name="Morgan M."/>
            <person name="Hawes A."/>
            <person name="Gill R."/>
            <person name="Holt R.A."/>
            <person name="Adams M.D."/>
            <person name="Amanatides P.G."/>
            <person name="Baden-Tillson H."/>
            <person name="Barnstead M."/>
            <person name="Chin S."/>
            <person name="Evans C.A."/>
            <person name="Ferriera S."/>
            <person name="Fosler C."/>
            <person name="Glodek A."/>
            <person name="Gu Z."/>
            <person name="Jennings D."/>
            <person name="Kraft C.L."/>
            <person name="Nguyen T."/>
            <person name="Pfannkoch C.M."/>
            <person name="Sitter C."/>
            <person name="Sutton G.G."/>
            <person name="Venter J.C."/>
            <person name="Woodage T."/>
            <person name="Smith D."/>
            <person name="Lee H.-M."/>
            <person name="Gustafson E."/>
            <person name="Cahill P."/>
            <person name="Kana A."/>
            <person name="Doucette-Stamm L."/>
            <person name="Weinstock K."/>
            <person name="Fechtel K."/>
            <person name="Weiss R.B."/>
            <person name="Dunn D.M."/>
            <person name="Green E.D."/>
            <person name="Blakesley R.W."/>
            <person name="Bouffard G.G."/>
            <person name="De Jong P.J."/>
            <person name="Osoegawa K."/>
            <person name="Zhu B."/>
            <person name="Marra M."/>
            <person name="Schein J."/>
            <person name="Bosdet I."/>
            <person name="Fjell C."/>
            <person name="Jones S."/>
            <person name="Krzywinski M."/>
            <person name="Mathewson C."/>
            <person name="Siddiqui A."/>
            <person name="Wye N."/>
            <person name="McPherson J."/>
            <person name="Zhao S."/>
            <person name="Fraser C.M."/>
            <person name="Shetty J."/>
            <person name="Shatsman S."/>
            <person name="Geer K."/>
            <person name="Chen Y."/>
            <person name="Abramzon S."/>
            <person name="Nierman W.C."/>
            <person name="Havlak P.H."/>
            <person name="Chen R."/>
            <person name="Durbin K.J."/>
            <person name="Egan A."/>
            <person name="Ren Y."/>
            <person name="Song X.-Z."/>
            <person name="Li B."/>
            <person name="Liu Y."/>
            <person name="Qin X."/>
            <person name="Cawley S."/>
            <person name="Cooney A.J."/>
            <person name="D'Souza L.M."/>
            <person name="Martin K."/>
            <person name="Wu J.Q."/>
            <person name="Gonzalez-Garay M.L."/>
            <person name="Jackson A.R."/>
            <person name="Kalafus K.J."/>
            <person name="McLeod M.P."/>
            <person name="Milosavljevic A."/>
            <person name="Virk D."/>
            <person name="Volkov A."/>
            <person name="Wheeler D.A."/>
            <person name="Zhang Z."/>
            <person name="Bailey J.A."/>
            <person name="Eichler E.E."/>
            <person name="Tuzun E."/>
            <person name="Birney E."/>
            <person name="Mongin E."/>
            <person name="Ureta-Vidal A."/>
            <person name="Woodwark C."/>
            <person name="Zdobnov E."/>
            <person name="Bork P."/>
            <person name="Suyama M."/>
            <person name="Torrents D."/>
            <person name="Alexandersson M."/>
            <person name="Trask B.J."/>
            <person name="Young J.M."/>
            <person name="Huang H."/>
            <person name="Wang H."/>
            <person name="Xing H."/>
            <person name="Daniels S."/>
            <person name="Gietzen D."/>
            <person name="Schmidt J."/>
            <person name="Stevens K."/>
            <person name="Vitt U."/>
            <person name="Wingrove J."/>
            <person name="Camara F."/>
            <person name="Mar Alba M."/>
            <person name="Abril J.F."/>
            <person name="Guigo R."/>
            <person name="Smit A."/>
            <person name="Dubchak I."/>
            <person name="Rubin E.M."/>
            <person name="Couronne O."/>
            <person name="Poliakov A."/>
            <person name="Huebner N."/>
            <person name="Ganten D."/>
            <person name="Goesele C."/>
            <person name="Hummel O."/>
            <person name="Kreitler T."/>
            <person name="Lee Y.-A."/>
            <person name="Monti J."/>
            <person name="Schulz H."/>
            <person name="Zimdahl H."/>
            <person name="Himmelbauer H."/>
            <person name="Lehrach H."/>
            <person name="Jacob H.J."/>
            <person name="Bromberg S."/>
            <person name="Gullings-Handley J."/>
            <person name="Jensen-Seaman M.I."/>
            <person name="Kwitek A.E."/>
            <person name="Lazar J."/>
            <person name="Pasko D."/>
            <person name="Tonellato P.J."/>
            <person name="Twigger S."/>
            <person name="Ponting C.P."/>
            <person name="Duarte J.M."/>
            <person name="Rice S."/>
            <person name="Goodstadt L."/>
            <person name="Beatson S.A."/>
            <person name="Emes R.D."/>
            <person name="Winter E.E."/>
            <person name="Webber C."/>
            <person name="Brandt P."/>
            <person name="Nyakatura G."/>
            <person name="Adetobi M."/>
            <person name="Chiaromonte F."/>
            <person name="Elnitski L."/>
            <person name="Eswara P."/>
            <person name="Hardison R.C."/>
            <person name="Hou M."/>
            <person name="Kolbe D."/>
            <person name="Makova K."/>
            <person name="Miller W."/>
            <person name="Nekrutenko A."/>
            <person name="Riemer C."/>
            <person name="Schwartz S."/>
            <person name="Taylor J."/>
            <person name="Yang S."/>
            <person name="Zhang Y."/>
            <person name="Lindpaintner K."/>
            <person name="Andrews T.D."/>
            <person name="Caccamo M."/>
            <person name="Clamp M."/>
            <person name="Clarke L."/>
            <person name="Curwen V."/>
            <person name="Durbin R.M."/>
            <person name="Eyras E."/>
            <person name="Searle S.M."/>
            <person name="Cooper G.M."/>
            <person name="Batzoglou S."/>
            <person name="Brudno M."/>
            <person name="Sidow A."/>
            <person name="Stone E.A."/>
            <person name="Payseur B.A."/>
            <person name="Bourque G."/>
            <person name="Lopez-Otin C."/>
            <person name="Puente X.S."/>
            <person name="Chakrabarti K."/>
            <person name="Chatterji S."/>
            <person name="Dewey C."/>
            <person name="Pachter L."/>
            <person name="Bray N."/>
            <person name="Yap V.B."/>
            <person name="Caspi A."/>
            <person name="Tesler G."/>
            <person name="Pevzner P.A."/>
            <person name="Haussler D."/>
            <person name="Roskin K.M."/>
            <person name="Baertsch R."/>
            <person name="Clawson H."/>
            <person name="Furey T.S."/>
            <person name="Hinrichs A.S."/>
            <person name="Karolchik D."/>
            <person name="Kent W.J."/>
            <person name="Rosenbloom K.R."/>
            <person name="Trumbower H."/>
            <person name="Weirauch M."/>
            <person name="Cooper D.N."/>
            <person name="Stenson P.D."/>
            <person name="Ma B."/>
            <person name="Brent M."/>
            <person name="Arumugam M."/>
            <person name="Shteynberg D."/>
            <person name="Copley R.R."/>
            <person name="Taylor M.S."/>
            <person name="Riethman H."/>
            <person name="Mudunuri U."/>
            <person name="Peterson J."/>
            <person name="Guyer M."/>
            <person name="Felsenfeld A."/>
            <person name="Old S."/>
            <person name="Mockrin S."/>
            <person name="Collins F.S."/>
        </authorList>
    </citation>
    <scope>NUCLEOTIDE SEQUENCE [LARGE SCALE GENOMIC DNA]</scope>
    <source>
        <strain>Brown Norway</strain>
    </source>
</reference>
<reference key="2">
    <citation type="submission" date="2005-07" db="EMBL/GenBank/DDBJ databases">
        <authorList>
            <person name="Mural R.J."/>
            <person name="Adams M.D."/>
            <person name="Myers E.W."/>
            <person name="Smith H.O."/>
            <person name="Venter J.C."/>
        </authorList>
    </citation>
    <scope>NUCLEOTIDE SEQUENCE [LARGE SCALE GENOMIC DNA]</scope>
    <source>
        <strain>Brown Norway</strain>
    </source>
</reference>
<reference key="3">
    <citation type="journal article" date="2012" name="Nat. Commun.">
        <title>Quantitative maps of protein phosphorylation sites across 14 different rat organs and tissues.</title>
        <authorList>
            <person name="Lundby A."/>
            <person name="Secher A."/>
            <person name="Lage K."/>
            <person name="Nordsborg N.B."/>
            <person name="Dmytriyev A."/>
            <person name="Lundby C."/>
            <person name="Olsen J.V."/>
        </authorList>
    </citation>
    <scope>PHOSPHORYLATION [LARGE SCALE ANALYSIS] AT SER-489 AND SER-492</scope>
    <scope>IDENTIFICATION BY MASS SPECTROMETRY [LARGE SCALE ANALYSIS]</scope>
</reference>
<protein>
    <recommendedName>
        <fullName>ATP-dependent DNA helicase Q5</fullName>
        <ecNumber evidence="2">5.6.2.4</ecNumber>
    </recommendedName>
    <alternativeName>
        <fullName evidence="7">DNA 3'-5' helicase RecQ5</fullName>
    </alternativeName>
    <alternativeName>
        <fullName>DNA helicase, RecQ-like type 5</fullName>
        <shortName>RecQ5</shortName>
    </alternativeName>
    <alternativeName>
        <fullName>RecQ protein-like 5</fullName>
    </alternativeName>
</protein>
<sequence>MSARPFSTPFDRERRVRSTLKKVFGFDSFKTPLQESAIMAVVKGDKDVFVCMPTGAGKSLCYQLPAVLAKGITIVVSPLIALIQDQVDHLLALKVQVSSLNSKLSVQERKELLSDLERDKPRTKLLYITPEMAASASFQPTLNSLLSRNLLSYLVVDEAHCVSQWGHDFRPDYLRLGALRSRLAHAPCVALTATATPQVQEDVFAALHLKQPVASFKTPCFRANLFYDVQFKELIPDVYGNLRDFCLKALGQKADNGSSSGCGIVYCRTREACEQLAIELSSRGVNAKAYHAGLKASERTQVQNEWMEEKVPVIVATISFGMGVDKANVRFVAHWNIAKSMAGYYQESGRAGRDGKPSWCRLYYSRNDRDQVSFLIRKELAKLQEKRGNKPSDKATLLAFDALVTFCEEVGCRHAAIAKYFGDAPPACAKGCDCCQSPAAIRKKLDALEHSSSWGKTCIGPSQGDGFDPELYEGGRRGYGGFSRYDEGSGGSGDEGRDEAHKREWNLFYQRQMSLRKGKEAKPEEFTPPGEDCPLRDASSRKIPKLTVKAREHCLRLLEEALNSNHQAAGSTHGADLQAKAVELEHETFRSAKMVNLYKASVLKKVAEIHKASKDGQLYDMESSTKSCGAIAELLEPSDYDIPPTSHLYSLKPKRVGAGFSKGPCPFQTATELLGKSQTEKLAPEAALESEQEPSGWVCDPQDGDRSKPCLGYQEEAPGSRTNCGDPSPEKRTKGSSQGSAKARASKRQQLLATAARKDSQSITRFLRQRTECPPPAASVPSSEDASPCGDVPGKCTEEVGAQGHLVAVFQTECPRERLSTCSLEDQSLPKGQPSPLKETQAEKRPRPQQESQEKRAQKRLRPSTNSSALASDPSTENRVAREPCQLSAPGISLKEAADIVVRYLTPFYKEGRFISKDLFKGFARHLSHLLAQKLSPGRSVKEEAQSLIKQFFHNRARCESEADWHGLCGPQR</sequence>
<feature type="chain" id="PRO_0000423435" description="ATP-dependent DNA helicase Q5">
    <location>
        <begin position="1"/>
        <end position="973"/>
    </location>
</feature>
<feature type="domain" description="Helicase ATP-binding" evidence="4">
    <location>
        <begin position="39"/>
        <end position="213"/>
    </location>
</feature>
<feature type="domain" description="Helicase C-terminal" evidence="5">
    <location>
        <begin position="241"/>
        <end position="398"/>
    </location>
</feature>
<feature type="region of interest" description="Interaction with POLR2A" evidence="1">
    <location>
        <begin position="491"/>
        <end position="621"/>
    </location>
</feature>
<feature type="region of interest" description="Disordered" evidence="6">
    <location>
        <begin position="518"/>
        <end position="538"/>
    </location>
</feature>
<feature type="region of interest" description="Interaction with RAD51" evidence="1">
    <location>
        <begin position="653"/>
        <end position="726"/>
    </location>
</feature>
<feature type="region of interest" description="Disordered" evidence="6">
    <location>
        <begin position="679"/>
        <end position="795"/>
    </location>
</feature>
<feature type="region of interest" description="Disordered" evidence="6">
    <location>
        <begin position="822"/>
        <end position="884"/>
    </location>
</feature>
<feature type="short sequence motif" description="DEAH box">
    <location>
        <begin position="157"/>
        <end position="160"/>
    </location>
</feature>
<feature type="compositionally biased region" description="Basic and acidic residues" evidence="6">
    <location>
        <begin position="840"/>
        <end position="856"/>
    </location>
</feature>
<feature type="compositionally biased region" description="Polar residues" evidence="6">
    <location>
        <begin position="863"/>
        <end position="878"/>
    </location>
</feature>
<feature type="binding site" evidence="4">
    <location>
        <begin position="52"/>
        <end position="59"/>
    </location>
    <ligand>
        <name>ATP</name>
        <dbReference type="ChEBI" id="CHEBI:30616"/>
    </ligand>
</feature>
<feature type="binding site" evidence="2">
    <location>
        <position position="412"/>
    </location>
    <ligand>
        <name>Zn(2+)</name>
        <dbReference type="ChEBI" id="CHEBI:29105"/>
    </ligand>
</feature>
<feature type="binding site" evidence="2">
    <location>
        <position position="428"/>
    </location>
    <ligand>
        <name>Zn(2+)</name>
        <dbReference type="ChEBI" id="CHEBI:29105"/>
    </ligand>
</feature>
<feature type="binding site" evidence="2">
    <location>
        <position position="432"/>
    </location>
    <ligand>
        <name>Zn(2+)</name>
        <dbReference type="ChEBI" id="CHEBI:29105"/>
    </ligand>
</feature>
<feature type="binding site" evidence="2">
    <location>
        <position position="435"/>
    </location>
    <ligand>
        <name>Zn(2+)</name>
        <dbReference type="ChEBI" id="CHEBI:29105"/>
    </ligand>
</feature>
<feature type="modified residue" description="Phosphoserine" evidence="8">
    <location>
        <position position="489"/>
    </location>
</feature>
<feature type="modified residue" description="Phosphoserine" evidence="8">
    <location>
        <position position="492"/>
    </location>
</feature>
<feature type="modified residue" description="Phosphothreonine" evidence="3">
    <location>
        <position position="527"/>
    </location>
</feature>
<feature type="modified residue" description="Phosphoserine; by CDK1" evidence="2">
    <location>
        <position position="728"/>
    </location>
</feature>
<organism>
    <name type="scientific">Rattus norvegicus</name>
    <name type="common">Rat</name>
    <dbReference type="NCBI Taxonomy" id="10116"/>
    <lineage>
        <taxon>Eukaryota</taxon>
        <taxon>Metazoa</taxon>
        <taxon>Chordata</taxon>
        <taxon>Craniata</taxon>
        <taxon>Vertebrata</taxon>
        <taxon>Euteleostomi</taxon>
        <taxon>Mammalia</taxon>
        <taxon>Eutheria</taxon>
        <taxon>Euarchontoglires</taxon>
        <taxon>Glires</taxon>
        <taxon>Rodentia</taxon>
        <taxon>Myomorpha</taxon>
        <taxon>Muroidea</taxon>
        <taxon>Muridae</taxon>
        <taxon>Murinae</taxon>
        <taxon>Rattus</taxon>
    </lineage>
</organism>
<gene>
    <name type="primary">Recql5</name>
</gene>
<proteinExistence type="evidence at protein level"/>